<reference key="1">
    <citation type="journal article" date="2003" name="J. Bacteriol.">
        <title>Comparative analyses of the complete genome sequences of Pierce's disease and citrus variegated chlorosis strains of Xylella fastidiosa.</title>
        <authorList>
            <person name="Van Sluys M.A."/>
            <person name="de Oliveira M.C."/>
            <person name="Monteiro-Vitorello C.B."/>
            <person name="Miyaki C.Y."/>
            <person name="Furlan L.R."/>
            <person name="Camargo L.E.A."/>
            <person name="da Silva A.C.R."/>
            <person name="Moon D.H."/>
            <person name="Takita M.A."/>
            <person name="Lemos E.G.M."/>
            <person name="Machado M.A."/>
            <person name="Ferro M.I.T."/>
            <person name="da Silva F.R."/>
            <person name="Goldman M.H.S."/>
            <person name="Goldman G.H."/>
            <person name="Lemos M.V.F."/>
            <person name="El-Dorry H."/>
            <person name="Tsai S.M."/>
            <person name="Carrer H."/>
            <person name="Carraro D.M."/>
            <person name="de Oliveira R.C."/>
            <person name="Nunes L.R."/>
            <person name="Siqueira W.J."/>
            <person name="Coutinho L.L."/>
            <person name="Kimura E.T."/>
            <person name="Ferro E.S."/>
            <person name="Harakava R."/>
            <person name="Kuramae E.E."/>
            <person name="Marino C.L."/>
            <person name="Giglioti E."/>
            <person name="Abreu I.L."/>
            <person name="Alves L.M.C."/>
            <person name="do Amaral A.M."/>
            <person name="Baia G.S."/>
            <person name="Blanco S.R."/>
            <person name="Brito M.S."/>
            <person name="Cannavan F.S."/>
            <person name="Celestino A.V."/>
            <person name="da Cunha A.F."/>
            <person name="Fenille R.C."/>
            <person name="Ferro J.A."/>
            <person name="Formighieri E.F."/>
            <person name="Kishi L.T."/>
            <person name="Leoni S.G."/>
            <person name="Oliveira A.R."/>
            <person name="Rosa V.E. Jr."/>
            <person name="Sassaki F.T."/>
            <person name="Sena J.A.D."/>
            <person name="de Souza A.A."/>
            <person name="Truffi D."/>
            <person name="Tsukumo F."/>
            <person name="Yanai G.M."/>
            <person name="Zaros L.G."/>
            <person name="Civerolo E.L."/>
            <person name="Simpson A.J.G."/>
            <person name="Almeida N.F. Jr."/>
            <person name="Setubal J.C."/>
            <person name="Kitajima J.P."/>
        </authorList>
    </citation>
    <scope>NUCLEOTIDE SEQUENCE [LARGE SCALE GENOMIC DNA]</scope>
    <source>
        <strain>Temecula1 / ATCC 700964</strain>
    </source>
</reference>
<proteinExistence type="inferred from homology"/>
<organism>
    <name type="scientific">Xylella fastidiosa (strain Temecula1 / ATCC 700964)</name>
    <dbReference type="NCBI Taxonomy" id="183190"/>
    <lineage>
        <taxon>Bacteria</taxon>
        <taxon>Pseudomonadati</taxon>
        <taxon>Pseudomonadota</taxon>
        <taxon>Gammaproteobacteria</taxon>
        <taxon>Lysobacterales</taxon>
        <taxon>Lysobacteraceae</taxon>
        <taxon>Xylella</taxon>
    </lineage>
</organism>
<feature type="chain" id="PRO_0000151505" description="Phosphoribosylamine--glycine ligase">
    <location>
        <begin position="1"/>
        <end position="430"/>
    </location>
</feature>
<feature type="domain" description="ATP-grasp" evidence="2">
    <location>
        <begin position="109"/>
        <end position="316"/>
    </location>
</feature>
<feature type="binding site" evidence="2">
    <location>
        <begin position="135"/>
        <end position="196"/>
    </location>
    <ligand>
        <name>ATP</name>
        <dbReference type="ChEBI" id="CHEBI:30616"/>
    </ligand>
</feature>
<feature type="binding site" evidence="2">
    <location>
        <position position="286"/>
    </location>
    <ligand>
        <name>Mg(2+)</name>
        <dbReference type="ChEBI" id="CHEBI:18420"/>
    </ligand>
</feature>
<feature type="binding site" evidence="2">
    <location>
        <position position="288"/>
    </location>
    <ligand>
        <name>Mg(2+)</name>
        <dbReference type="ChEBI" id="CHEBI:18420"/>
    </ligand>
</feature>
<protein>
    <recommendedName>
        <fullName evidence="2">Phosphoribosylamine--glycine ligase</fullName>
        <ecNumber evidence="2">6.3.4.13</ecNumber>
    </recommendedName>
    <alternativeName>
        <fullName evidence="2">GARS</fullName>
    </alternativeName>
    <alternativeName>
        <fullName evidence="2">Glycinamide ribonucleotide synthetase</fullName>
    </alternativeName>
    <alternativeName>
        <fullName evidence="2">Phosphoribosylglycinamide synthetase</fullName>
    </alternativeName>
</protein>
<sequence length="430" mass="45338">MKLLVIGSGGREHALVWKLAHSRRVSEIIVAPGNAGTATETKCRNAPVQVTDLDGLLALAQREAVNITVVGPEVPLVAGIVDCFRAAGMRIFGPTAAAAQLEGSKAYAKDFMARHGIPTARYAVHTNVDAAISDVRQQGAPIVIKADGLAAGKGVIVAMTVTEAEAAIRDMLSGNAFGHAGARVVIEEYLDGEEASFISMVDGTHALPMATSQDHKRVSDGDIGPNTGGMGAYSPAPIITDEIHARVMREIVNPTVAGMIADGTPFMGFLYAGLMIDVHGAPKVIEFNVRFGDPETQPVMMRLQSDLLDLIEAALNGDLDKVQAQWDPHPSLGVVMAARPYPEMPITGEVISGLDALPANVKVFHAGTALDVAGRVVTAGGRVLCVTALGSNVSEAQRHAYGGVASLHWANAFQRSDIGWRAIMREHTVR</sequence>
<comment type="catalytic activity">
    <reaction evidence="2">
        <text>5-phospho-beta-D-ribosylamine + glycine + ATP = N(1)-(5-phospho-beta-D-ribosyl)glycinamide + ADP + phosphate + H(+)</text>
        <dbReference type="Rhea" id="RHEA:17453"/>
        <dbReference type="ChEBI" id="CHEBI:15378"/>
        <dbReference type="ChEBI" id="CHEBI:30616"/>
        <dbReference type="ChEBI" id="CHEBI:43474"/>
        <dbReference type="ChEBI" id="CHEBI:57305"/>
        <dbReference type="ChEBI" id="CHEBI:58681"/>
        <dbReference type="ChEBI" id="CHEBI:143788"/>
        <dbReference type="ChEBI" id="CHEBI:456216"/>
        <dbReference type="EC" id="6.3.4.13"/>
    </reaction>
</comment>
<comment type="cofactor">
    <cofactor evidence="1">
        <name>Mg(2+)</name>
        <dbReference type="ChEBI" id="CHEBI:18420"/>
    </cofactor>
    <cofactor evidence="1">
        <name>Mn(2+)</name>
        <dbReference type="ChEBI" id="CHEBI:29035"/>
    </cofactor>
    <text evidence="1">Binds 1 Mg(2+) or Mn(2+) ion per subunit.</text>
</comment>
<comment type="pathway">
    <text evidence="2">Purine metabolism; IMP biosynthesis via de novo pathway; N(1)-(5-phospho-D-ribosyl)glycinamide from 5-phospho-alpha-D-ribose 1-diphosphate: step 2/2.</text>
</comment>
<comment type="similarity">
    <text evidence="2">Belongs to the GARS family.</text>
</comment>
<evidence type="ECO:0000250" key="1"/>
<evidence type="ECO:0000255" key="2">
    <source>
        <dbReference type="HAMAP-Rule" id="MF_00138"/>
    </source>
</evidence>
<dbReference type="EC" id="6.3.4.13" evidence="2"/>
<dbReference type="EMBL" id="AE009442">
    <property type="protein sequence ID" value="AAO28695.1"/>
    <property type="molecule type" value="Genomic_DNA"/>
</dbReference>
<dbReference type="RefSeq" id="WP_004089504.1">
    <property type="nucleotide sequence ID" value="NC_004556.1"/>
</dbReference>
<dbReference type="SMR" id="Q87D59"/>
<dbReference type="GeneID" id="93904614"/>
<dbReference type="KEGG" id="xft:PD_0827"/>
<dbReference type="HOGENOM" id="CLU_027420_3_1_6"/>
<dbReference type="UniPathway" id="UPA00074">
    <property type="reaction ID" value="UER00125"/>
</dbReference>
<dbReference type="Proteomes" id="UP000002516">
    <property type="component" value="Chromosome"/>
</dbReference>
<dbReference type="GO" id="GO:0005524">
    <property type="term" value="F:ATP binding"/>
    <property type="evidence" value="ECO:0007669"/>
    <property type="project" value="UniProtKB-KW"/>
</dbReference>
<dbReference type="GO" id="GO:0046872">
    <property type="term" value="F:metal ion binding"/>
    <property type="evidence" value="ECO:0007669"/>
    <property type="project" value="UniProtKB-KW"/>
</dbReference>
<dbReference type="GO" id="GO:0004637">
    <property type="term" value="F:phosphoribosylamine-glycine ligase activity"/>
    <property type="evidence" value="ECO:0007669"/>
    <property type="project" value="UniProtKB-UniRule"/>
</dbReference>
<dbReference type="GO" id="GO:0006189">
    <property type="term" value="P:'de novo' IMP biosynthetic process"/>
    <property type="evidence" value="ECO:0007669"/>
    <property type="project" value="UniProtKB-UniRule"/>
</dbReference>
<dbReference type="GO" id="GO:0009113">
    <property type="term" value="P:purine nucleobase biosynthetic process"/>
    <property type="evidence" value="ECO:0007669"/>
    <property type="project" value="InterPro"/>
</dbReference>
<dbReference type="FunFam" id="3.30.470.20:FF:000031">
    <property type="entry name" value="Phosphoribosylamine--glycine ligase"/>
    <property type="match status" value="1"/>
</dbReference>
<dbReference type="FunFam" id="3.40.50.20:FF:000006">
    <property type="entry name" value="Phosphoribosylamine--glycine ligase, chloroplastic"/>
    <property type="match status" value="1"/>
</dbReference>
<dbReference type="FunFam" id="3.30.1490.20:FF:000006">
    <property type="entry name" value="phosphoribosylamine--glycine ligase, chloroplastic-like"/>
    <property type="match status" value="1"/>
</dbReference>
<dbReference type="FunFam" id="3.90.600.10:FF:000001">
    <property type="entry name" value="Trifunctional purine biosynthetic protein adenosine-3"/>
    <property type="match status" value="1"/>
</dbReference>
<dbReference type="Gene3D" id="3.40.50.20">
    <property type="match status" value="1"/>
</dbReference>
<dbReference type="Gene3D" id="3.30.1490.20">
    <property type="entry name" value="ATP-grasp fold, A domain"/>
    <property type="match status" value="1"/>
</dbReference>
<dbReference type="Gene3D" id="3.30.470.20">
    <property type="entry name" value="ATP-grasp fold, B domain"/>
    <property type="match status" value="1"/>
</dbReference>
<dbReference type="Gene3D" id="3.90.600.10">
    <property type="entry name" value="Phosphoribosylglycinamide synthetase, C-terminal domain"/>
    <property type="match status" value="1"/>
</dbReference>
<dbReference type="HAMAP" id="MF_00138">
    <property type="entry name" value="GARS"/>
    <property type="match status" value="1"/>
</dbReference>
<dbReference type="InterPro" id="IPR011761">
    <property type="entry name" value="ATP-grasp"/>
</dbReference>
<dbReference type="InterPro" id="IPR013815">
    <property type="entry name" value="ATP_grasp_subdomain_1"/>
</dbReference>
<dbReference type="InterPro" id="IPR016185">
    <property type="entry name" value="PreATP-grasp_dom_sf"/>
</dbReference>
<dbReference type="InterPro" id="IPR020561">
    <property type="entry name" value="PRibGlycinamid_synth_ATP-grasp"/>
</dbReference>
<dbReference type="InterPro" id="IPR000115">
    <property type="entry name" value="PRibGlycinamide_synth"/>
</dbReference>
<dbReference type="InterPro" id="IPR020560">
    <property type="entry name" value="PRibGlycinamide_synth_C-dom"/>
</dbReference>
<dbReference type="InterPro" id="IPR037123">
    <property type="entry name" value="PRibGlycinamide_synth_C_sf"/>
</dbReference>
<dbReference type="InterPro" id="IPR020559">
    <property type="entry name" value="PRibGlycinamide_synth_CS"/>
</dbReference>
<dbReference type="InterPro" id="IPR020562">
    <property type="entry name" value="PRibGlycinamide_synth_N"/>
</dbReference>
<dbReference type="InterPro" id="IPR011054">
    <property type="entry name" value="Rudment_hybrid_motif"/>
</dbReference>
<dbReference type="NCBIfam" id="TIGR00877">
    <property type="entry name" value="purD"/>
    <property type="match status" value="1"/>
</dbReference>
<dbReference type="PANTHER" id="PTHR43472">
    <property type="entry name" value="PHOSPHORIBOSYLAMINE--GLYCINE LIGASE"/>
    <property type="match status" value="1"/>
</dbReference>
<dbReference type="PANTHER" id="PTHR43472:SF1">
    <property type="entry name" value="PHOSPHORIBOSYLAMINE--GLYCINE LIGASE, CHLOROPLASTIC"/>
    <property type="match status" value="1"/>
</dbReference>
<dbReference type="Pfam" id="PF01071">
    <property type="entry name" value="GARS_A"/>
    <property type="match status" value="1"/>
</dbReference>
<dbReference type="Pfam" id="PF02843">
    <property type="entry name" value="GARS_C"/>
    <property type="match status" value="1"/>
</dbReference>
<dbReference type="Pfam" id="PF02844">
    <property type="entry name" value="GARS_N"/>
    <property type="match status" value="1"/>
</dbReference>
<dbReference type="SMART" id="SM01209">
    <property type="entry name" value="GARS_A"/>
    <property type="match status" value="1"/>
</dbReference>
<dbReference type="SMART" id="SM01210">
    <property type="entry name" value="GARS_C"/>
    <property type="match status" value="1"/>
</dbReference>
<dbReference type="SUPFAM" id="SSF56059">
    <property type="entry name" value="Glutathione synthetase ATP-binding domain-like"/>
    <property type="match status" value="1"/>
</dbReference>
<dbReference type="SUPFAM" id="SSF52440">
    <property type="entry name" value="PreATP-grasp domain"/>
    <property type="match status" value="1"/>
</dbReference>
<dbReference type="SUPFAM" id="SSF51246">
    <property type="entry name" value="Rudiment single hybrid motif"/>
    <property type="match status" value="1"/>
</dbReference>
<dbReference type="PROSITE" id="PS50975">
    <property type="entry name" value="ATP_GRASP"/>
    <property type="match status" value="1"/>
</dbReference>
<dbReference type="PROSITE" id="PS00184">
    <property type="entry name" value="GARS"/>
    <property type="match status" value="1"/>
</dbReference>
<gene>
    <name evidence="2" type="primary">purD</name>
    <name type="ordered locus">PD_0827</name>
</gene>
<name>PUR2_XYLFT</name>
<accession>Q87D59</accession>
<keyword id="KW-0067">ATP-binding</keyword>
<keyword id="KW-0436">Ligase</keyword>
<keyword id="KW-0460">Magnesium</keyword>
<keyword id="KW-0464">Manganese</keyword>
<keyword id="KW-0479">Metal-binding</keyword>
<keyword id="KW-0547">Nucleotide-binding</keyword>
<keyword id="KW-0658">Purine biosynthesis</keyword>
<keyword id="KW-1185">Reference proteome</keyword>